<organism>
    <name type="scientific">Homo sapiens</name>
    <name type="common">Human</name>
    <dbReference type="NCBI Taxonomy" id="9606"/>
    <lineage>
        <taxon>Eukaryota</taxon>
        <taxon>Metazoa</taxon>
        <taxon>Chordata</taxon>
        <taxon>Craniata</taxon>
        <taxon>Vertebrata</taxon>
        <taxon>Euteleostomi</taxon>
        <taxon>Mammalia</taxon>
        <taxon>Eutheria</taxon>
        <taxon>Euarchontoglires</taxon>
        <taxon>Primates</taxon>
        <taxon>Haplorrhini</taxon>
        <taxon>Catarrhini</taxon>
        <taxon>Hominidae</taxon>
        <taxon>Homo</taxon>
    </lineage>
</organism>
<gene>
    <name type="primary">TBX18</name>
</gene>
<feature type="chain" id="PRO_0000184446" description="T-box transcription factor TBX18">
    <location>
        <begin position="1"/>
        <end position="607"/>
    </location>
</feature>
<feature type="DNA-binding region" description="T-box" evidence="2">
    <location>
        <begin position="143"/>
        <end position="330"/>
    </location>
</feature>
<feature type="region of interest" description="Disordered" evidence="3">
    <location>
        <begin position="30"/>
        <end position="141"/>
    </location>
</feature>
<feature type="short sequence motif" description="Engrailed homology 1 repressor" evidence="6">
    <location>
        <begin position="18"/>
        <end position="28"/>
    </location>
</feature>
<feature type="short sequence motif" description="Nuclear localization signal" evidence="6">
    <location>
        <begin position="36"/>
        <end position="40"/>
    </location>
</feature>
<feature type="compositionally biased region" description="Low complexity" evidence="3">
    <location>
        <begin position="44"/>
        <end position="53"/>
    </location>
</feature>
<feature type="sequence variant" id="VAR_052263" description="In dbSNP:rs172562." evidence="4">
    <original>G</original>
    <variation>R</variation>
    <location>
        <position position="48"/>
    </location>
</feature>
<feature type="sequence variant" id="VAR_074629" description="In CAKUT2; results in decreased transcriptional repression through a dominant negative effect; does not affect nuclear localization; does not bind DNA; no effect on interaction with SIX1; no effect on interaction with TLE3; dbSNP:rs797045022." evidence="5">
    <original>K</original>
    <variation>E</variation>
    <location>
        <position position="163"/>
    </location>
</feature>
<feature type="sequence variant" id="VAR_074630" evidence="5">
    <original>A</original>
    <variation>T</variation>
    <location>
        <position position="164"/>
    </location>
</feature>
<feature type="sequence variant" id="VAR_074631" description="In CAKUT2; results in decreased transcriptional repression through a dominant negative effect; does not affect nuclear localization; no effect on DNA binding; no effect on interaction with SIX1; no effect on interaction with TLE3; dbSNP:rs760905589." evidence="5">
    <original>H</original>
    <variation>Y</variation>
    <location>
        <position position="524"/>
    </location>
</feature>
<feature type="sequence variant" id="VAR_074632" evidence="5">
    <original>P</original>
    <variation>S</variation>
    <location>
        <position position="526"/>
    </location>
</feature>
<evidence type="ECO:0000250" key="1">
    <source>
        <dbReference type="UniProtKB" id="Q9EPZ6"/>
    </source>
</evidence>
<evidence type="ECO:0000255" key="2">
    <source>
        <dbReference type="PROSITE-ProRule" id="PRU00201"/>
    </source>
</evidence>
<evidence type="ECO:0000256" key="3">
    <source>
        <dbReference type="SAM" id="MobiDB-lite"/>
    </source>
</evidence>
<evidence type="ECO:0000269" key="4">
    <source>
    </source>
</evidence>
<evidence type="ECO:0000269" key="5">
    <source>
    </source>
</evidence>
<evidence type="ECO:0000305" key="6"/>
<comment type="function">
    <text evidence="1 5">Acts as a transcriptional repressor involved in developmental processes of a variety of tissues and organs, including the heart and coronary vessels, the ureter and the vertebral column. Required for embryonic development of the sino atrial node (SAN) head area.</text>
</comment>
<comment type="subunit">
    <text evidence="1 5">Homodimer. Can form a heterodimer with TBX15. Interacts with GATA4 and NKX2-5. Interacts with PAX3 (By similarity). Interacts (via engrailed homology 1 repressor motif) with TLE3; this interaction represses TBX18 transcriptional activity (By similarity) (PubMed:26235987). Interacts with SIX1 (PubMed:26235987).</text>
</comment>
<comment type="interaction">
    <interactant intactId="EBI-12085364">
        <id>O95935</id>
    </interactant>
    <interactant intactId="EBI-750550">
        <id>Q7LC44</id>
        <label>ARC</label>
    </interactant>
    <organismsDiffer>false</organismsDiffer>
    <experiments>3</experiments>
</comment>
<comment type="interaction">
    <interactant intactId="EBI-12085364">
        <id>O95935</id>
    </interactant>
    <interactant intactId="EBI-10261141">
        <id>Q8IUC2</id>
        <label>KRTAP8-1</label>
    </interactant>
    <organismsDiffer>false</organismsDiffer>
    <experiments>3</experiments>
</comment>
<comment type="interaction">
    <interactant intactId="EBI-12085364">
        <id>O95935</id>
    </interactant>
    <interactant intactId="EBI-949255">
        <id>Q58EX7</id>
        <label>PLEKHG4</label>
    </interactant>
    <organismsDiffer>false</organismsDiffer>
    <experiments>3</experiments>
</comment>
<comment type="interaction">
    <interactant intactId="EBI-12085364">
        <id>O95935</id>
    </interactant>
    <interactant intactId="EBI-359224">
        <id>Q13077</id>
        <label>TRAF1</label>
    </interactant>
    <organismsDiffer>false</organismsDiffer>
    <experiments>3</experiments>
</comment>
<comment type="subcellular location">
    <subcellularLocation>
        <location evidence="2 5">Nucleus</location>
    </subcellularLocation>
</comment>
<comment type="disease" evidence="5">
    <disease id="DI-04535">
        <name>Congenital anomalies of kidney and urinary tract 2</name>
        <acronym>CAKUT2</acronym>
        <description>A disorder encompassing a broad spectrum of renal and urinary tract malformations that include renal agenesis, kidney hypodysplasia, multicystic kidney dysplasia, duplex collecting system, posterior urethral valves and ureter abnormalities. Congenital anomalies of kidney and urinary tract are the commonest cause of chronic kidney disease in children.</description>
        <dbReference type="MIM" id="143400"/>
    </disease>
    <text>The disease is caused by variants affecting the gene represented in this entry.</text>
</comment>
<comment type="online information" name="Protein Spotlight">
    <link uri="https://www.proteinspotlight.org/back_issues/165/"/>
    <text>At the heart of things - Issue 165 of November 2014</text>
</comment>
<protein>
    <recommendedName>
        <fullName>T-box transcription factor TBX18</fullName>
        <shortName>T-box protein 18</shortName>
    </recommendedName>
</protein>
<keyword id="KW-0217">Developmental protein</keyword>
<keyword id="KW-0225">Disease variant</keyword>
<keyword id="KW-0238">DNA-binding</keyword>
<keyword id="KW-0539">Nucleus</keyword>
<keyword id="KW-1267">Proteomics identification</keyword>
<keyword id="KW-1185">Reference proteome</keyword>
<keyword id="KW-0678">Repressor</keyword>
<keyword id="KW-0804">Transcription</keyword>
<keyword id="KW-0805">Transcription regulation</keyword>
<name>TBX18_HUMAN</name>
<sequence>MAEKRRGSPCSMLSLKAHAFSVEALIGAEKQQQLQKKRRKLGAEEAAGAVDDGGCSRGGGAGEKGSSEGDEGAALPPPAGATSGPARSGADLERGAAGGCEDGFQQGASPLASPGGSPKGSPARSLARPGTPLPSPQAPRVDLQGAELWKRFHEIGTEMIITKAGRRMFPAMRVKISGLDPHQQYYIAMDIVPVDNKRYRYVYHSSKWMVAGNADSPVPPRVYIHPDSPASGETWMRQVISFDKLKLTNNELDDQGHIILHSMHKYQPRVHVIRKDCGDDLSPIKPVPSGEGVKAFSFPETVFTTVTAYQNQQITRLKIDRNPFAKGFRDSGRNRMGLEALVESYAFWRPSLRTLTFEDIPGIPKQGNASSSTLLQGTGNGVPATHPHLLSGSSCSSPAFHLGPNTSQLCSLAPADYSACARSGLTLNRYSTSLAETYNRLTNQAGETFAPPRTPSYVGVSSSTSVNMSMGGTDGDTFSCPQTSLSMQISGMSPQLQYIMPSPSSNAFATNQTHQGSYNTFRLHSPCALYGYNFSTSPKLAASPEKIVSSQGSFLGSSPSGTMTDRQMLPPVEGVHLLSSGGQQSFFDSRTLGSLTLSSSQVSAHMV</sequence>
<dbReference type="EMBL" id="AL035694">
    <property type="status" value="NOT_ANNOTATED_CDS"/>
    <property type="molecule type" value="Genomic_DNA"/>
</dbReference>
<dbReference type="EMBL" id="BC132715">
    <property type="protein sequence ID" value="AAI32716.1"/>
    <property type="molecule type" value="mRNA"/>
</dbReference>
<dbReference type="EMBL" id="BC157841">
    <property type="protein sequence ID" value="AAI57842.1"/>
    <property type="molecule type" value="mRNA"/>
</dbReference>
<dbReference type="EMBL" id="AJ010278">
    <property type="protein sequence ID" value="CAB37937.1"/>
    <property type="molecule type" value="mRNA"/>
</dbReference>
<dbReference type="CCDS" id="CCDS34495.1"/>
<dbReference type="RefSeq" id="NP_001073977.1">
    <property type="nucleotide sequence ID" value="NM_001080508.3"/>
</dbReference>
<dbReference type="SMR" id="O95935"/>
<dbReference type="BioGRID" id="114550">
    <property type="interactions" value="11"/>
</dbReference>
<dbReference type="CORUM" id="O95935"/>
<dbReference type="FunCoup" id="O95935">
    <property type="interactions" value="1504"/>
</dbReference>
<dbReference type="IntAct" id="O95935">
    <property type="interactions" value="6"/>
</dbReference>
<dbReference type="STRING" id="9606.ENSP00000358677"/>
<dbReference type="GlyGen" id="O95935">
    <property type="glycosylation" value="1 site, 1 O-linked glycan (1 site)"/>
</dbReference>
<dbReference type="iPTMnet" id="O95935"/>
<dbReference type="PhosphoSitePlus" id="O95935"/>
<dbReference type="BioMuta" id="TBX18"/>
<dbReference type="jPOST" id="O95935"/>
<dbReference type="MassIVE" id="O95935"/>
<dbReference type="PaxDb" id="9606-ENSP00000358677"/>
<dbReference type="PeptideAtlas" id="O95935"/>
<dbReference type="ProteomicsDB" id="51134"/>
<dbReference type="Pumba" id="O95935"/>
<dbReference type="Antibodypedia" id="18548">
    <property type="antibodies" value="267 antibodies from 37 providers"/>
</dbReference>
<dbReference type="DNASU" id="9096"/>
<dbReference type="Ensembl" id="ENST00000369663.10">
    <property type="protein sequence ID" value="ENSP00000358677.4"/>
    <property type="gene ID" value="ENSG00000112837.17"/>
</dbReference>
<dbReference type="GeneID" id="9096"/>
<dbReference type="KEGG" id="hsa:9096"/>
<dbReference type="MANE-Select" id="ENST00000369663.10">
    <property type="protein sequence ID" value="ENSP00000358677.4"/>
    <property type="RefSeq nucleotide sequence ID" value="NM_001080508.3"/>
    <property type="RefSeq protein sequence ID" value="NP_001073977.1"/>
</dbReference>
<dbReference type="UCSC" id="uc003pkl.4">
    <property type="organism name" value="human"/>
</dbReference>
<dbReference type="AGR" id="HGNC:11595"/>
<dbReference type="CTD" id="9096"/>
<dbReference type="DisGeNET" id="9096"/>
<dbReference type="GeneCards" id="TBX18"/>
<dbReference type="HGNC" id="HGNC:11595">
    <property type="gene designation" value="TBX18"/>
</dbReference>
<dbReference type="HPA" id="ENSG00000112837">
    <property type="expression patterns" value="Tissue enhanced (adipose)"/>
</dbReference>
<dbReference type="MalaCards" id="TBX18"/>
<dbReference type="MIM" id="143400">
    <property type="type" value="phenotype"/>
</dbReference>
<dbReference type="MIM" id="604613">
    <property type="type" value="gene"/>
</dbReference>
<dbReference type="neXtProt" id="NX_O95935"/>
<dbReference type="OpenTargets" id="ENSG00000112837"/>
<dbReference type="PharmGKB" id="PA36358"/>
<dbReference type="VEuPathDB" id="HostDB:ENSG00000112837"/>
<dbReference type="eggNOG" id="KOG3586">
    <property type="taxonomic scope" value="Eukaryota"/>
</dbReference>
<dbReference type="GeneTree" id="ENSGT00940000155566"/>
<dbReference type="HOGENOM" id="CLU_030727_0_0_1"/>
<dbReference type="InParanoid" id="O95935"/>
<dbReference type="OMA" id="NMSMSGN"/>
<dbReference type="OrthoDB" id="7442607at2759"/>
<dbReference type="PAN-GO" id="O95935">
    <property type="GO annotations" value="6 GO annotations based on evolutionary models"/>
</dbReference>
<dbReference type="PhylomeDB" id="O95935"/>
<dbReference type="TreeFam" id="TF106341"/>
<dbReference type="PathwayCommons" id="O95935"/>
<dbReference type="SignaLink" id="O95935"/>
<dbReference type="SIGNOR" id="O95935"/>
<dbReference type="BioGRID-ORCS" id="9096">
    <property type="hits" value="5 hits in 1187 CRISPR screens"/>
</dbReference>
<dbReference type="ChiTaRS" id="TBX18">
    <property type="organism name" value="human"/>
</dbReference>
<dbReference type="GenomeRNAi" id="9096"/>
<dbReference type="Pharos" id="O95935">
    <property type="development level" value="Tbio"/>
</dbReference>
<dbReference type="PRO" id="PR:O95935"/>
<dbReference type="Proteomes" id="UP000005640">
    <property type="component" value="Chromosome 6"/>
</dbReference>
<dbReference type="RNAct" id="O95935">
    <property type="molecule type" value="protein"/>
</dbReference>
<dbReference type="Bgee" id="ENSG00000112837">
    <property type="expression patterns" value="Expressed in right coronary artery and 102 other cell types or tissues"/>
</dbReference>
<dbReference type="ExpressionAtlas" id="O95935">
    <property type="expression patterns" value="baseline and differential"/>
</dbReference>
<dbReference type="GO" id="GO:0000785">
    <property type="term" value="C:chromatin"/>
    <property type="evidence" value="ECO:0000247"/>
    <property type="project" value="NTNU_SB"/>
</dbReference>
<dbReference type="GO" id="GO:0005654">
    <property type="term" value="C:nucleoplasm"/>
    <property type="evidence" value="ECO:0000314"/>
    <property type="project" value="HPA"/>
</dbReference>
<dbReference type="GO" id="GO:0005634">
    <property type="term" value="C:nucleus"/>
    <property type="evidence" value="ECO:0000314"/>
    <property type="project" value="UniProtKB"/>
</dbReference>
<dbReference type="GO" id="GO:0090571">
    <property type="term" value="C:RNA polymerase II transcription repressor complex"/>
    <property type="evidence" value="ECO:0000250"/>
    <property type="project" value="ARUK-UCL"/>
</dbReference>
<dbReference type="GO" id="GO:0000981">
    <property type="term" value="F:DNA-binding transcription factor activity, RNA polymerase II-specific"/>
    <property type="evidence" value="ECO:0000247"/>
    <property type="project" value="NTNU_SB"/>
</dbReference>
<dbReference type="GO" id="GO:0001227">
    <property type="term" value="F:DNA-binding transcription repressor activity, RNA polymerase II-specific"/>
    <property type="evidence" value="ECO:0000250"/>
    <property type="project" value="BHF-UCL"/>
</dbReference>
<dbReference type="GO" id="GO:0042803">
    <property type="term" value="F:protein homodimerization activity"/>
    <property type="evidence" value="ECO:0000250"/>
    <property type="project" value="BHF-UCL"/>
</dbReference>
<dbReference type="GO" id="GO:0000978">
    <property type="term" value="F:RNA polymerase II cis-regulatory region sequence-specific DNA binding"/>
    <property type="evidence" value="ECO:0000250"/>
    <property type="project" value="BHF-UCL"/>
</dbReference>
<dbReference type="GO" id="GO:1990837">
    <property type="term" value="F:sequence-specific double-stranded DNA binding"/>
    <property type="evidence" value="ECO:0000314"/>
    <property type="project" value="ARUK-UCL"/>
</dbReference>
<dbReference type="GO" id="GO:0001708">
    <property type="term" value="P:cell fate specification"/>
    <property type="evidence" value="ECO:0000318"/>
    <property type="project" value="GO_Central"/>
</dbReference>
<dbReference type="GO" id="GO:0090103">
    <property type="term" value="P:cochlea morphogenesis"/>
    <property type="evidence" value="ECO:0000250"/>
    <property type="project" value="ARUK-UCL"/>
</dbReference>
<dbReference type="GO" id="GO:0016331">
    <property type="term" value="P:morphogenesis of embryonic epithelium"/>
    <property type="evidence" value="ECO:0000318"/>
    <property type="project" value="GO_Central"/>
</dbReference>
<dbReference type="GO" id="GO:0090090">
    <property type="term" value="P:negative regulation of canonical Wnt signaling pathway"/>
    <property type="evidence" value="ECO:0000250"/>
    <property type="project" value="BHF-UCL"/>
</dbReference>
<dbReference type="GO" id="GO:0000122">
    <property type="term" value="P:negative regulation of transcription by RNA polymerase II"/>
    <property type="evidence" value="ECO:0000250"/>
    <property type="project" value="BHF-UCL"/>
</dbReference>
<dbReference type="GO" id="GO:0021999">
    <property type="term" value="P:neural plate anterior/posterior regionalization"/>
    <property type="evidence" value="ECO:0000250"/>
    <property type="project" value="BHF-UCL"/>
</dbReference>
<dbReference type="GO" id="GO:0045893">
    <property type="term" value="P:positive regulation of DNA-templated transcription"/>
    <property type="evidence" value="ECO:0007669"/>
    <property type="project" value="InterPro"/>
</dbReference>
<dbReference type="GO" id="GO:0098907">
    <property type="term" value="P:regulation of SA node cell action potential"/>
    <property type="evidence" value="ECO:0000315"/>
    <property type="project" value="BHF-UCL"/>
</dbReference>
<dbReference type="GO" id="GO:0006357">
    <property type="term" value="P:regulation of transcription by RNA polymerase II"/>
    <property type="evidence" value="ECO:0000318"/>
    <property type="project" value="GO_Central"/>
</dbReference>
<dbReference type="GO" id="GO:0060931">
    <property type="term" value="P:sinoatrial node cell development"/>
    <property type="evidence" value="ECO:0000315"/>
    <property type="project" value="BHF-UCL"/>
</dbReference>
<dbReference type="GO" id="GO:0060930">
    <property type="term" value="P:sinoatrial node cell fate commitment"/>
    <property type="evidence" value="ECO:0000315"/>
    <property type="project" value="BHF-UCL"/>
</dbReference>
<dbReference type="GO" id="GO:0003163">
    <property type="term" value="P:sinoatrial node development"/>
    <property type="evidence" value="ECO:0000250"/>
    <property type="project" value="BHF-UCL"/>
</dbReference>
<dbReference type="GO" id="GO:0051145">
    <property type="term" value="P:smooth muscle cell differentiation"/>
    <property type="evidence" value="ECO:0000250"/>
    <property type="project" value="ARUK-UCL"/>
</dbReference>
<dbReference type="GO" id="GO:0001756">
    <property type="term" value="P:somitogenesis"/>
    <property type="evidence" value="ECO:0000250"/>
    <property type="project" value="ARUK-UCL"/>
</dbReference>
<dbReference type="GO" id="GO:0072189">
    <property type="term" value="P:ureter development"/>
    <property type="evidence" value="ECO:0000315"/>
    <property type="project" value="UniProtKB"/>
</dbReference>
<dbReference type="CDD" id="cd20191">
    <property type="entry name" value="T-box_TBX15_18_22-like"/>
    <property type="match status" value="1"/>
</dbReference>
<dbReference type="FunFam" id="2.60.40.820:FF:000001">
    <property type="entry name" value="T-box transcription factor TBX18"/>
    <property type="match status" value="1"/>
</dbReference>
<dbReference type="Gene3D" id="2.60.40.820">
    <property type="entry name" value="Transcription factor, T-box"/>
    <property type="match status" value="1"/>
</dbReference>
<dbReference type="InterPro" id="IPR008967">
    <property type="entry name" value="p53-like_TF_DNA-bd_sf"/>
</dbReference>
<dbReference type="InterPro" id="IPR046360">
    <property type="entry name" value="T-box_DNA-bd"/>
</dbReference>
<dbReference type="InterPro" id="IPR036960">
    <property type="entry name" value="T-box_sf"/>
</dbReference>
<dbReference type="InterPro" id="IPR001699">
    <property type="entry name" value="TF_T-box"/>
</dbReference>
<dbReference type="InterPro" id="IPR018186">
    <property type="entry name" value="TF_T-box_CS"/>
</dbReference>
<dbReference type="PANTHER" id="PTHR11267">
    <property type="entry name" value="T-BOX PROTEIN-RELATED"/>
    <property type="match status" value="1"/>
</dbReference>
<dbReference type="PANTHER" id="PTHR11267:SF20">
    <property type="entry name" value="T-BOX TRANSCRIPTION FACTOR TBX18"/>
    <property type="match status" value="1"/>
</dbReference>
<dbReference type="Pfam" id="PF00907">
    <property type="entry name" value="T-box"/>
    <property type="match status" value="1"/>
</dbReference>
<dbReference type="PRINTS" id="PR00937">
    <property type="entry name" value="TBOX"/>
</dbReference>
<dbReference type="SMART" id="SM00425">
    <property type="entry name" value="TBOX"/>
    <property type="match status" value="1"/>
</dbReference>
<dbReference type="SUPFAM" id="SSF49417">
    <property type="entry name" value="p53-like transcription factors"/>
    <property type="match status" value="1"/>
</dbReference>
<dbReference type="PROSITE" id="PS01283">
    <property type="entry name" value="TBOX_1"/>
    <property type="match status" value="1"/>
</dbReference>
<dbReference type="PROSITE" id="PS01264">
    <property type="entry name" value="TBOX_2"/>
    <property type="match status" value="1"/>
</dbReference>
<dbReference type="PROSITE" id="PS50252">
    <property type="entry name" value="TBOX_3"/>
    <property type="match status" value="1"/>
</dbReference>
<reference key="1">
    <citation type="journal article" date="2003" name="Nature">
        <title>The DNA sequence and analysis of human chromosome 6.</title>
        <authorList>
            <person name="Mungall A.J."/>
            <person name="Palmer S.A."/>
            <person name="Sims S.K."/>
            <person name="Edwards C.A."/>
            <person name="Ashurst J.L."/>
            <person name="Wilming L."/>
            <person name="Jones M.C."/>
            <person name="Horton R."/>
            <person name="Hunt S.E."/>
            <person name="Scott C.E."/>
            <person name="Gilbert J.G.R."/>
            <person name="Clamp M.E."/>
            <person name="Bethel G."/>
            <person name="Milne S."/>
            <person name="Ainscough R."/>
            <person name="Almeida J.P."/>
            <person name="Ambrose K.D."/>
            <person name="Andrews T.D."/>
            <person name="Ashwell R.I.S."/>
            <person name="Babbage A.K."/>
            <person name="Bagguley C.L."/>
            <person name="Bailey J."/>
            <person name="Banerjee R."/>
            <person name="Barker D.J."/>
            <person name="Barlow K.F."/>
            <person name="Bates K."/>
            <person name="Beare D.M."/>
            <person name="Beasley H."/>
            <person name="Beasley O."/>
            <person name="Bird C.P."/>
            <person name="Blakey S.E."/>
            <person name="Bray-Allen S."/>
            <person name="Brook J."/>
            <person name="Brown A.J."/>
            <person name="Brown J.Y."/>
            <person name="Burford D.C."/>
            <person name="Burrill W."/>
            <person name="Burton J."/>
            <person name="Carder C."/>
            <person name="Carter N.P."/>
            <person name="Chapman J.C."/>
            <person name="Clark S.Y."/>
            <person name="Clark G."/>
            <person name="Clee C.M."/>
            <person name="Clegg S."/>
            <person name="Cobley V."/>
            <person name="Collier R.E."/>
            <person name="Collins J.E."/>
            <person name="Colman L.K."/>
            <person name="Corby N.R."/>
            <person name="Coville G.J."/>
            <person name="Culley K.M."/>
            <person name="Dhami P."/>
            <person name="Davies J."/>
            <person name="Dunn M."/>
            <person name="Earthrowl M.E."/>
            <person name="Ellington A.E."/>
            <person name="Evans K.A."/>
            <person name="Faulkner L."/>
            <person name="Francis M.D."/>
            <person name="Frankish A."/>
            <person name="Frankland J."/>
            <person name="French L."/>
            <person name="Garner P."/>
            <person name="Garnett J."/>
            <person name="Ghori M.J."/>
            <person name="Gilby L.M."/>
            <person name="Gillson C.J."/>
            <person name="Glithero R.J."/>
            <person name="Grafham D.V."/>
            <person name="Grant M."/>
            <person name="Gribble S."/>
            <person name="Griffiths C."/>
            <person name="Griffiths M.N.D."/>
            <person name="Hall R."/>
            <person name="Halls K.S."/>
            <person name="Hammond S."/>
            <person name="Harley J.L."/>
            <person name="Hart E.A."/>
            <person name="Heath P.D."/>
            <person name="Heathcott R."/>
            <person name="Holmes S.J."/>
            <person name="Howden P.J."/>
            <person name="Howe K.L."/>
            <person name="Howell G.R."/>
            <person name="Huckle E."/>
            <person name="Humphray S.J."/>
            <person name="Humphries M.D."/>
            <person name="Hunt A.R."/>
            <person name="Johnson C.M."/>
            <person name="Joy A.A."/>
            <person name="Kay M."/>
            <person name="Keenan S.J."/>
            <person name="Kimberley A.M."/>
            <person name="King A."/>
            <person name="Laird G.K."/>
            <person name="Langford C."/>
            <person name="Lawlor S."/>
            <person name="Leongamornlert D.A."/>
            <person name="Leversha M."/>
            <person name="Lloyd C.R."/>
            <person name="Lloyd D.M."/>
            <person name="Loveland J.E."/>
            <person name="Lovell J."/>
            <person name="Martin S."/>
            <person name="Mashreghi-Mohammadi M."/>
            <person name="Maslen G.L."/>
            <person name="Matthews L."/>
            <person name="McCann O.T."/>
            <person name="McLaren S.J."/>
            <person name="McLay K."/>
            <person name="McMurray A."/>
            <person name="Moore M.J.F."/>
            <person name="Mullikin J.C."/>
            <person name="Niblett D."/>
            <person name="Nickerson T."/>
            <person name="Novik K.L."/>
            <person name="Oliver K."/>
            <person name="Overton-Larty E.K."/>
            <person name="Parker A."/>
            <person name="Patel R."/>
            <person name="Pearce A.V."/>
            <person name="Peck A.I."/>
            <person name="Phillimore B.J.C.T."/>
            <person name="Phillips S."/>
            <person name="Plumb R.W."/>
            <person name="Porter K.M."/>
            <person name="Ramsey Y."/>
            <person name="Ranby S.A."/>
            <person name="Rice C.M."/>
            <person name="Ross M.T."/>
            <person name="Searle S.M."/>
            <person name="Sehra H.K."/>
            <person name="Sheridan E."/>
            <person name="Skuce C.D."/>
            <person name="Smith S."/>
            <person name="Smith M."/>
            <person name="Spraggon L."/>
            <person name="Squares S.L."/>
            <person name="Steward C.A."/>
            <person name="Sycamore N."/>
            <person name="Tamlyn-Hall G."/>
            <person name="Tester J."/>
            <person name="Theaker A.J."/>
            <person name="Thomas D.W."/>
            <person name="Thorpe A."/>
            <person name="Tracey A."/>
            <person name="Tromans A."/>
            <person name="Tubby B."/>
            <person name="Wall M."/>
            <person name="Wallis J.M."/>
            <person name="West A.P."/>
            <person name="White S.S."/>
            <person name="Whitehead S.L."/>
            <person name="Whittaker H."/>
            <person name="Wild A."/>
            <person name="Willey D.J."/>
            <person name="Wilmer T.E."/>
            <person name="Wood J.M."/>
            <person name="Wray P.W."/>
            <person name="Wyatt J.C."/>
            <person name="Young L."/>
            <person name="Younger R.M."/>
            <person name="Bentley D.R."/>
            <person name="Coulson A."/>
            <person name="Durbin R.M."/>
            <person name="Hubbard T."/>
            <person name="Sulston J.E."/>
            <person name="Dunham I."/>
            <person name="Rogers J."/>
            <person name="Beck S."/>
        </authorList>
    </citation>
    <scope>NUCLEOTIDE SEQUENCE [LARGE SCALE GENOMIC DNA]</scope>
</reference>
<reference key="2">
    <citation type="journal article" date="2004" name="Genome Res.">
        <title>The status, quality, and expansion of the NIH full-length cDNA project: the Mammalian Gene Collection (MGC).</title>
        <authorList>
            <consortium name="The MGC Project Team"/>
        </authorList>
    </citation>
    <scope>NUCLEOTIDE SEQUENCE [LARGE SCALE MRNA]</scope>
    <scope>VARIANT ARG-48</scope>
</reference>
<reference key="3">
    <citation type="journal article" date="1999" name="Genomics">
        <title>Identification, mapping and phylogenomic analysis of four new human members of the T-box gene family: EOMES, TBX6, TBX18, and TBX19.</title>
        <authorList>
            <person name="Yi C.-H."/>
            <person name="Terrett J.A."/>
            <person name="Li Q.-Y."/>
            <person name="Ellington K."/>
            <person name="Packham E.A."/>
            <person name="Amstrong-Buisseret L."/>
            <person name="McClure P."/>
            <person name="Slingsby T."/>
            <person name="Brook J.D."/>
        </authorList>
    </citation>
    <scope>NUCLEOTIDE SEQUENCE [MRNA] OF 149-330</scope>
</reference>
<reference key="4">
    <citation type="journal article" date="2015" name="Am. J. Hum. Genet.">
        <title>Mutations in TBX18 cause dominant urinary tract malformations via transcriptional dysregulation of ureter development.</title>
        <authorList>
            <person name="Vivante A."/>
            <person name="Kleppa M.J."/>
            <person name="Schulz J."/>
            <person name="Kohl S."/>
            <person name="Sharma A."/>
            <person name="Chen J."/>
            <person name="Shril S."/>
            <person name="Hwang D.Y."/>
            <person name="Weiss A.C."/>
            <person name="Kaminski M.M."/>
            <person name="Shukrun R."/>
            <person name="Kemper M.J."/>
            <person name="Lehnhardt A."/>
            <person name="Beetz R."/>
            <person name="Sanna-Cherchi S."/>
            <person name="Verbitsky M."/>
            <person name="Gharavi A.G."/>
            <person name="Stuart H.M."/>
            <person name="Feather S.A."/>
            <person name="Goodship J.A."/>
            <person name="Goodship T.H."/>
            <person name="Woolf A.S."/>
            <person name="Westra S.J."/>
            <person name="Doody D.P."/>
            <person name="Bauer S.B."/>
            <person name="Lee R.S."/>
            <person name="Adam R.M."/>
            <person name="Lu W."/>
            <person name="Reutter H.M."/>
            <person name="Kehinde E.O."/>
            <person name="Mancini E.J."/>
            <person name="Lifton R.P."/>
            <person name="Tasic V."/>
            <person name="Lienkamp S.S."/>
            <person name="Jueppner H."/>
            <person name="Kispert A."/>
            <person name="Hildebrandt F."/>
        </authorList>
    </citation>
    <scope>FUNCTION</scope>
    <scope>SUBCELLULAR LOCATION</scope>
    <scope>INTERACTION WITH SIX1 AND TLE3</scope>
    <scope>INVOLVEMENT IN CAKUT2</scope>
    <scope>VARIANTS CAKUT2 GLU-163 AND TYR-524</scope>
    <scope>CHARACTERIZATION OF VARIANTS CAKUT2 GLU-163 AND TYR-524</scope>
    <scope>VARIANTS THR-164 AND SER-526</scope>
</reference>
<accession>O95935</accession>
<accession>A2RU13</accession>
<accession>Q7Z6U4</accession>
<accession>Q9UJI6</accession>
<proteinExistence type="evidence at protein level"/>